<organism>
    <name type="scientific">Saccharolobus islandicus (strain M.16.27)</name>
    <name type="common">Sulfolobus islandicus</name>
    <dbReference type="NCBI Taxonomy" id="427318"/>
    <lineage>
        <taxon>Archaea</taxon>
        <taxon>Thermoproteota</taxon>
        <taxon>Thermoprotei</taxon>
        <taxon>Sulfolobales</taxon>
        <taxon>Sulfolobaceae</taxon>
        <taxon>Saccharolobus</taxon>
    </lineage>
</organism>
<keyword id="KW-0386">Hypusine biosynthesis</keyword>
<keyword id="KW-0520">NAD</keyword>
<keyword id="KW-0808">Transferase</keyword>
<feature type="chain" id="PRO_1000203444" description="Probable deoxyhypusine synthase">
    <location>
        <begin position="1"/>
        <end position="312"/>
    </location>
</feature>
<feature type="active site" description="Nucleophile" evidence="1">
    <location>
        <position position="285"/>
    </location>
</feature>
<dbReference type="EC" id="2.5.1.46" evidence="1"/>
<dbReference type="EMBL" id="CP001401">
    <property type="protein sequence ID" value="ACP55189.1"/>
    <property type="molecule type" value="Genomic_DNA"/>
</dbReference>
<dbReference type="RefSeq" id="WP_012711264.1">
    <property type="nucleotide sequence ID" value="NC_012632.1"/>
</dbReference>
<dbReference type="SMR" id="C3N5B4"/>
<dbReference type="KEGG" id="sim:M1627_1306"/>
<dbReference type="HOGENOM" id="CLU_039781_1_0_2"/>
<dbReference type="UniPathway" id="UPA00354"/>
<dbReference type="Proteomes" id="UP000002307">
    <property type="component" value="Chromosome"/>
</dbReference>
<dbReference type="GO" id="GO:0005737">
    <property type="term" value="C:cytoplasm"/>
    <property type="evidence" value="ECO:0007669"/>
    <property type="project" value="TreeGrafter"/>
</dbReference>
<dbReference type="GO" id="GO:0034038">
    <property type="term" value="F:deoxyhypusine synthase activity"/>
    <property type="evidence" value="ECO:0007669"/>
    <property type="project" value="UniProtKB-UniRule"/>
</dbReference>
<dbReference type="FunFam" id="3.40.910.10:FF:000007">
    <property type="entry name" value="Probable deoxyhypusine synthase"/>
    <property type="match status" value="1"/>
</dbReference>
<dbReference type="Gene3D" id="3.40.910.10">
    <property type="entry name" value="Deoxyhypusine synthase"/>
    <property type="match status" value="1"/>
</dbReference>
<dbReference type="HAMAP" id="MF_00153">
    <property type="entry name" value="DHS"/>
    <property type="match status" value="1"/>
</dbReference>
<dbReference type="InterPro" id="IPR022899">
    <property type="entry name" value="Deoxyhypus_synthase_arc"/>
</dbReference>
<dbReference type="InterPro" id="IPR002773">
    <property type="entry name" value="Deoxyhypusine_synthase"/>
</dbReference>
<dbReference type="InterPro" id="IPR036982">
    <property type="entry name" value="Deoxyhypusine_synthase_sf"/>
</dbReference>
<dbReference type="InterPro" id="IPR029035">
    <property type="entry name" value="DHS-like_NAD/FAD-binding_dom"/>
</dbReference>
<dbReference type="NCBIfam" id="NF002294">
    <property type="entry name" value="PRK01221.1"/>
    <property type="match status" value="1"/>
</dbReference>
<dbReference type="PANTHER" id="PTHR11703">
    <property type="entry name" value="DEOXYHYPUSINE SYNTHASE"/>
    <property type="match status" value="1"/>
</dbReference>
<dbReference type="PANTHER" id="PTHR11703:SF0">
    <property type="entry name" value="DEOXYHYPUSINE SYNTHASE"/>
    <property type="match status" value="1"/>
</dbReference>
<dbReference type="Pfam" id="PF01916">
    <property type="entry name" value="DS"/>
    <property type="match status" value="1"/>
</dbReference>
<dbReference type="SUPFAM" id="SSF52467">
    <property type="entry name" value="DHS-like NAD/FAD-binding domain"/>
    <property type="match status" value="1"/>
</dbReference>
<evidence type="ECO:0000255" key="1">
    <source>
        <dbReference type="HAMAP-Rule" id="MF_00153"/>
    </source>
</evidence>
<proteinExistence type="inferred from homology"/>
<reference key="1">
    <citation type="journal article" date="2009" name="Proc. Natl. Acad. Sci. U.S.A.">
        <title>Biogeography of the Sulfolobus islandicus pan-genome.</title>
        <authorList>
            <person name="Reno M.L."/>
            <person name="Held N.L."/>
            <person name="Fields C.J."/>
            <person name="Burke P.V."/>
            <person name="Whitaker R.J."/>
        </authorList>
    </citation>
    <scope>NUCLEOTIDE SEQUENCE [LARGE SCALE GENOMIC DNA]</scope>
    <source>
        <strain>M.16.27</strain>
    </source>
</reference>
<comment type="function">
    <text evidence="1">Catalyzes the NAD-dependent oxidative cleavage of spermidine and the subsequent transfer of the butylamine moiety of spermidine to the epsilon-amino group of a specific lysine residue of the eIF-5A precursor protein to form the intermediate deoxyhypusine residue.</text>
</comment>
<comment type="catalytic activity">
    <reaction evidence="1">
        <text>[eIF5A protein]-L-lysine + spermidine = [eIF5A protein]-deoxyhypusine + propane-1,3-diamine</text>
        <dbReference type="Rhea" id="RHEA:33299"/>
        <dbReference type="Rhea" id="RHEA-COMP:10143"/>
        <dbReference type="Rhea" id="RHEA-COMP:10144"/>
        <dbReference type="ChEBI" id="CHEBI:29969"/>
        <dbReference type="ChEBI" id="CHEBI:57484"/>
        <dbReference type="ChEBI" id="CHEBI:57834"/>
        <dbReference type="ChEBI" id="CHEBI:82657"/>
        <dbReference type="EC" id="2.5.1.46"/>
    </reaction>
</comment>
<comment type="cofactor">
    <cofactor evidence="1">
        <name>NAD(+)</name>
        <dbReference type="ChEBI" id="CHEBI:57540"/>
    </cofactor>
</comment>
<comment type="pathway">
    <text evidence="1">Protein modification; eIF5A hypusination.</text>
</comment>
<comment type="similarity">
    <text evidence="1">Belongs to the deoxyhypusine synthase family.</text>
</comment>
<protein>
    <recommendedName>
        <fullName evidence="1">Probable deoxyhypusine synthase</fullName>
        <shortName evidence="1">DHS</shortName>
        <ecNumber evidence="1">2.5.1.46</ecNumber>
    </recommendedName>
</protein>
<sequence>MINREDLLKNPVEDIALSDLEKYSDIVNVFDKIYGFSSEGIVRGSKILKEMIKDADLRFLSFTANLVSTGLRGLFADLVKRGYFNIIVTTGGTIDHDLARSFGGVYYKGSFDIDDAMLKDLEIHRLGNVLVPFESYGKVIEEIVRKFLPEIAKDKKEIPAYELLWEFGKRISDSNSILRAAYEKKVPVIVPGIVDGSFGTNLFIQSQFLNFKINLFEDMRLIKDLVFSCKKSGALIIGGGISKHHTIWWNQFKDGLDYAVYVTTAQEYDGSLSGAKPREAISWNKIRPNAKHATIYGDATIIVPILAASLLS</sequence>
<gene>
    <name evidence="1" type="primary">dys</name>
    <name type="ordered locus">M1627_1306</name>
</gene>
<accession>C3N5B4</accession>
<name>DHYS_SACI3</name>